<proteinExistence type="inferred from homology"/>
<dbReference type="EMBL" id="AE004437">
    <property type="protein sequence ID" value="AAG18795.1"/>
    <property type="molecule type" value="Genomic_DNA"/>
</dbReference>
<dbReference type="PIR" id="G84178">
    <property type="entry name" value="G84178"/>
</dbReference>
<dbReference type="RefSeq" id="WP_010902090.1">
    <property type="nucleotide sequence ID" value="NC_002607.1"/>
</dbReference>
<dbReference type="SMR" id="P0DMH7"/>
<dbReference type="STRING" id="64091.VNG_0180G"/>
<dbReference type="PaxDb" id="64091-VNG_0180G"/>
<dbReference type="GeneID" id="89348755"/>
<dbReference type="KEGG" id="hal:VNG_0180G"/>
<dbReference type="PATRIC" id="fig|64091.14.peg.132"/>
<dbReference type="HOGENOM" id="CLU_054785_5_1_2"/>
<dbReference type="InParanoid" id="P0DMH7"/>
<dbReference type="OrthoDB" id="186372at2157"/>
<dbReference type="PhylomeDB" id="P0DMH7"/>
<dbReference type="EvolutionaryTrace" id="P0DMH7"/>
<dbReference type="Proteomes" id="UP000000554">
    <property type="component" value="Chromosome"/>
</dbReference>
<dbReference type="GO" id="GO:0005886">
    <property type="term" value="C:plasma membrane"/>
    <property type="evidence" value="ECO:0007669"/>
    <property type="project" value="UniProtKB-SubCell"/>
</dbReference>
<dbReference type="GO" id="GO:0005216">
    <property type="term" value="F:monoatomic ion channel activity"/>
    <property type="evidence" value="ECO:0007669"/>
    <property type="project" value="InterPro"/>
</dbReference>
<dbReference type="GO" id="GO:0009881">
    <property type="term" value="F:photoreceptor activity"/>
    <property type="evidence" value="ECO:0007669"/>
    <property type="project" value="UniProtKB-KW"/>
</dbReference>
<dbReference type="GO" id="GO:0007602">
    <property type="term" value="P:phototransduction"/>
    <property type="evidence" value="ECO:0007669"/>
    <property type="project" value="UniProtKB-KW"/>
</dbReference>
<dbReference type="CDD" id="cd15243">
    <property type="entry name" value="7tm_Halorhodopsin"/>
    <property type="match status" value="1"/>
</dbReference>
<dbReference type="Gene3D" id="1.20.1070.10">
    <property type="entry name" value="Rhodopsin 7-helix transmembrane proteins"/>
    <property type="match status" value="1"/>
</dbReference>
<dbReference type="InterPro" id="IPR001425">
    <property type="entry name" value="Arc/bac/fun_rhodopsins"/>
</dbReference>
<dbReference type="InterPro" id="IPR018229">
    <property type="entry name" value="Rhodopsin_retinal_BS"/>
</dbReference>
<dbReference type="PANTHER" id="PTHR28286">
    <property type="match status" value="1"/>
</dbReference>
<dbReference type="PANTHER" id="PTHR28286:SF2">
    <property type="entry name" value="BACTERIORHODOPSIN _OPSIN, NOPA (EUROFUNG)"/>
    <property type="match status" value="1"/>
</dbReference>
<dbReference type="Pfam" id="PF01036">
    <property type="entry name" value="Bac_rhodopsin"/>
    <property type="match status" value="1"/>
</dbReference>
<dbReference type="PRINTS" id="PR00251">
    <property type="entry name" value="BACTRLOPSIN"/>
</dbReference>
<dbReference type="SMART" id="SM01021">
    <property type="entry name" value="Bac_rhodopsin"/>
    <property type="match status" value="1"/>
</dbReference>
<dbReference type="SUPFAM" id="SSF81321">
    <property type="entry name" value="Family A G protein-coupled receptor-like"/>
    <property type="match status" value="1"/>
</dbReference>
<dbReference type="PROSITE" id="PS00950">
    <property type="entry name" value="BACTERIAL_OPSIN_1"/>
    <property type="match status" value="1"/>
</dbReference>
<dbReference type="PROSITE" id="PS00327">
    <property type="entry name" value="BACTERIAL_OPSIN_RET"/>
    <property type="match status" value="1"/>
</dbReference>
<protein>
    <recommendedName>
        <fullName>Halorhodopsin</fullName>
        <shortName>HR</shortName>
    </recommendedName>
</protein>
<reference key="1">
    <citation type="journal article" date="2000" name="Proc. Natl. Acad. Sci. U.S.A.">
        <title>Genome sequence of Halobacterium species NRC-1.</title>
        <authorList>
            <person name="Ng W.V."/>
            <person name="Kennedy S.P."/>
            <person name="Mahairas G.G."/>
            <person name="Berquist B."/>
            <person name="Pan M."/>
            <person name="Shukla H.D."/>
            <person name="Lasky S.R."/>
            <person name="Baliga N.S."/>
            <person name="Thorsson V."/>
            <person name="Sbrogna J."/>
            <person name="Swartzell S."/>
            <person name="Weir D."/>
            <person name="Hall J."/>
            <person name="Dahl T.A."/>
            <person name="Welti R."/>
            <person name="Goo Y.A."/>
            <person name="Leithauser B."/>
            <person name="Keller K."/>
            <person name="Cruz R."/>
            <person name="Danson M.J."/>
            <person name="Hough D.W."/>
            <person name="Maddocks D.G."/>
            <person name="Jablonski P.E."/>
            <person name="Krebs M.P."/>
            <person name="Angevine C.M."/>
            <person name="Dale H."/>
            <person name="Isenbarger T.A."/>
            <person name="Peck R.F."/>
            <person name="Pohlschroder M."/>
            <person name="Spudich J.L."/>
            <person name="Jung K.-H."/>
            <person name="Alam M."/>
            <person name="Freitas T."/>
            <person name="Hou S."/>
            <person name="Daniels C.J."/>
            <person name="Dennis P.P."/>
            <person name="Omer A.D."/>
            <person name="Ebhardt H."/>
            <person name="Lowe T.M."/>
            <person name="Liang P."/>
            <person name="Riley M."/>
            <person name="Hood L."/>
            <person name="DasSarma S."/>
        </authorList>
    </citation>
    <scope>NUCLEOTIDE SEQUENCE [LARGE SCALE GENOMIC DNA]</scope>
    <source>
        <strain>ATCC 700922 / JCM 11081 / NRC-1</strain>
    </source>
</reference>
<gene>
    <name type="primary">hop</name>
    <name type="ordered locus">VNG_0180G</name>
</gene>
<name>BACH_HALSA</name>
<sequence>MSITSVPGVVDAGVLGAQSAAAVRENALLSSSLWVNVALAGIAILVFVYMGRTIRPGRPRLIWGATLMIPLVSISSYLGLLSGLTVGMIEMPAGHALAGEMVRSQWGRYLTWALSTPMILLALGLLADVDLGSLFTVIAADIGMCVTGLAAAMTTSALLFRWAFYAISCAFFVVVLSALVTDWAASASSAGTAEIFDTLRVLTVVLWLGYPIVWAVGVEGLALVQSVGVTSWAYSVLDVFAKYVFAFILLRWVANNERTVAVAGQTLGTMSSDD</sequence>
<keyword id="KW-1003">Cell membrane</keyword>
<keyword id="KW-0868">Chloride</keyword>
<keyword id="KW-0157">Chromophore</keyword>
<keyword id="KW-0406">Ion transport</keyword>
<keyword id="KW-0472">Membrane</keyword>
<keyword id="KW-0600">Photoreceptor protein</keyword>
<keyword id="KW-0675">Receptor</keyword>
<keyword id="KW-1185">Reference proteome</keyword>
<keyword id="KW-0681">Retinal protein</keyword>
<keyword id="KW-0716">Sensory transduction</keyword>
<keyword id="KW-0812">Transmembrane</keyword>
<keyword id="KW-1133">Transmembrane helix</keyword>
<keyword id="KW-0813">Transport</keyword>
<comment type="function">
    <text evidence="1">Light-driven chloride pump.</text>
</comment>
<comment type="subunit">
    <text evidence="1">Homotrimer.</text>
</comment>
<comment type="subcellular location">
    <subcellularLocation>
        <location evidence="1">Cell membrane</location>
        <topology evidence="1">Multi-pass membrane protein</topology>
    </subcellularLocation>
</comment>
<comment type="similarity">
    <text evidence="2">Belongs to the archaeal/bacterial/fungal opsin family.</text>
</comment>
<accession>P0DMH7</accession>
<accession>P16102</accession>
<accession>Q9HSK9</accession>
<organism>
    <name type="scientific">Halobacterium salinarum (strain ATCC 700922 / JCM 11081 / NRC-1)</name>
    <name type="common">Halobacterium halobium</name>
    <dbReference type="NCBI Taxonomy" id="64091"/>
    <lineage>
        <taxon>Archaea</taxon>
        <taxon>Methanobacteriati</taxon>
        <taxon>Methanobacteriota</taxon>
        <taxon>Stenosarchaea group</taxon>
        <taxon>Halobacteria</taxon>
        <taxon>Halobacteriales</taxon>
        <taxon>Halobacteriaceae</taxon>
        <taxon>Halobacterium</taxon>
        <taxon>Halobacterium salinarum NRC-34001</taxon>
    </lineage>
</organism>
<evidence type="ECO:0000250" key="1"/>
<evidence type="ECO:0000305" key="2"/>
<feature type="propeptide" id="PRO_0000020238" evidence="1">
    <location>
        <begin position="1"/>
        <end position="21"/>
    </location>
</feature>
<feature type="chain" id="PRO_0000020239" description="Halorhodopsin">
    <location>
        <begin position="22"/>
        <end position="274"/>
    </location>
</feature>
<feature type="topological domain" description="Extracellular" evidence="1">
    <location>
        <begin position="22"/>
        <end position="25"/>
    </location>
</feature>
<feature type="transmembrane region" description="Helical; Name=Helix A" evidence="1">
    <location>
        <begin position="26"/>
        <end position="51"/>
    </location>
</feature>
<feature type="topological domain" description="Cytoplasmic" evidence="1">
    <location>
        <begin position="52"/>
        <end position="57"/>
    </location>
</feature>
<feature type="transmembrane region" description="Helical; Name=Helix B" evidence="1">
    <location>
        <begin position="58"/>
        <end position="81"/>
    </location>
</feature>
<feature type="topological domain" description="Extracellular" evidence="1">
    <location>
        <begin position="82"/>
        <end position="105"/>
    </location>
</feature>
<feature type="transmembrane region" description="Helical; Name=Helix C" evidence="1">
    <location>
        <begin position="106"/>
        <end position="127"/>
    </location>
</feature>
<feature type="topological domain" description="Cytoplasmic" evidence="1">
    <location>
        <begin position="128"/>
        <end position="130"/>
    </location>
</feature>
<feature type="transmembrane region" description="Helical; Name=Helix D" evidence="1">
    <location>
        <begin position="131"/>
        <end position="154"/>
    </location>
</feature>
<feature type="topological domain" description="Extracellular" evidence="1">
    <location>
        <begin position="155"/>
        <end position="157"/>
    </location>
</feature>
<feature type="transmembrane region" description="Helical; Name=Helix E" evidence="1">
    <location>
        <begin position="158"/>
        <end position="180"/>
    </location>
</feature>
<feature type="topological domain" description="Cytoplasmic" evidence="1">
    <location>
        <begin position="181"/>
        <end position="192"/>
    </location>
</feature>
<feature type="transmembrane region" description="Helical; Name=Helix F" evidence="1">
    <location>
        <begin position="193"/>
        <end position="216"/>
    </location>
</feature>
<feature type="topological domain" description="Extracellular" evidence="1">
    <location>
        <begin position="217"/>
        <end position="226"/>
    </location>
</feature>
<feature type="transmembrane region" description="Helical; Name=Helix G" evidence="1">
    <location>
        <begin position="227"/>
        <end position="255"/>
    </location>
</feature>
<feature type="topological domain" description="Cytoplasmic" evidence="1">
    <location>
        <begin position="256"/>
        <end position="274"/>
    </location>
</feature>
<feature type="modified residue" description="N6-(retinylidene)lysine" evidence="1">
    <location>
        <position position="242"/>
    </location>
</feature>